<proteinExistence type="inferred from homology"/>
<organism>
    <name type="scientific">Enterobacter sp. (strain 638)</name>
    <dbReference type="NCBI Taxonomy" id="399742"/>
    <lineage>
        <taxon>Bacteria</taxon>
        <taxon>Pseudomonadati</taxon>
        <taxon>Pseudomonadota</taxon>
        <taxon>Gammaproteobacteria</taxon>
        <taxon>Enterobacterales</taxon>
        <taxon>Enterobacteriaceae</taxon>
        <taxon>Enterobacter</taxon>
    </lineage>
</organism>
<evidence type="ECO:0000250" key="1"/>
<evidence type="ECO:0000255" key="2">
    <source>
        <dbReference type="HAMAP-Rule" id="MF_00103"/>
    </source>
</evidence>
<reference key="1">
    <citation type="journal article" date="2010" name="PLoS Genet.">
        <title>Genome sequence of the plant growth promoting endophytic bacterium Enterobacter sp. 638.</title>
        <authorList>
            <person name="Taghavi S."/>
            <person name="van der Lelie D."/>
            <person name="Hoffman A."/>
            <person name="Zhang Y.B."/>
            <person name="Walla M.D."/>
            <person name="Vangronsveld J."/>
            <person name="Newman L."/>
            <person name="Monchy S."/>
        </authorList>
    </citation>
    <scope>NUCLEOTIDE SEQUENCE [LARGE SCALE GENOMIC DNA]</scope>
    <source>
        <strain>638</strain>
    </source>
</reference>
<protein>
    <recommendedName>
        <fullName evidence="2">Formamidopyrimidine-DNA glycosylase</fullName>
        <shortName evidence="2">Fapy-DNA glycosylase</shortName>
        <ecNumber evidence="2">3.2.2.23</ecNumber>
    </recommendedName>
    <alternativeName>
        <fullName evidence="2">DNA-(apurinic or apyrimidinic site) lyase MutM</fullName>
        <shortName evidence="2">AP lyase MutM</shortName>
        <ecNumber evidence="2">4.2.99.18</ecNumber>
    </alternativeName>
</protein>
<keyword id="KW-0227">DNA damage</keyword>
<keyword id="KW-0234">DNA repair</keyword>
<keyword id="KW-0238">DNA-binding</keyword>
<keyword id="KW-0326">Glycosidase</keyword>
<keyword id="KW-0378">Hydrolase</keyword>
<keyword id="KW-0456">Lyase</keyword>
<keyword id="KW-0479">Metal-binding</keyword>
<keyword id="KW-0511">Multifunctional enzyme</keyword>
<keyword id="KW-0862">Zinc</keyword>
<keyword id="KW-0863">Zinc-finger</keyword>
<sequence length="269" mass="30145">MPELPEVETSRRGIEPHLVGATILHAVVRNGRLRWPVSNEIHTLSDKPVLSVQRRAKYLLLELPDGWIIIHLGMSGSLRILSEELPAEKHDHVDLVMSNGKVLRYTDPRRFGAWLWTKELEGHNVLAHLGPEPLSEAFNAEYLKARCAKKKTPIKPWLMDNKLVVGVGNIYASESLFAAGIHPDRLASSLSEQECEILVKVIKAVLLRSIEQGGTTLKDFLQSDGKPGYFAQELQVYGRKGEPCRVCGTPIVASKHAQRATFYCRQCQK</sequence>
<dbReference type="EC" id="3.2.2.23" evidence="2"/>
<dbReference type="EC" id="4.2.99.18" evidence="2"/>
<dbReference type="EMBL" id="CP000653">
    <property type="protein sequence ID" value="ABP58794.1"/>
    <property type="molecule type" value="Genomic_DNA"/>
</dbReference>
<dbReference type="RefSeq" id="WP_011915370.1">
    <property type="nucleotide sequence ID" value="NC_009436.1"/>
</dbReference>
<dbReference type="SMR" id="A4W514"/>
<dbReference type="STRING" id="399742.Ent638_0104"/>
<dbReference type="KEGG" id="ent:Ent638_0104"/>
<dbReference type="eggNOG" id="COG0266">
    <property type="taxonomic scope" value="Bacteria"/>
</dbReference>
<dbReference type="HOGENOM" id="CLU_038423_1_1_6"/>
<dbReference type="OrthoDB" id="9800855at2"/>
<dbReference type="Proteomes" id="UP000000230">
    <property type="component" value="Chromosome"/>
</dbReference>
<dbReference type="GO" id="GO:0034039">
    <property type="term" value="F:8-oxo-7,8-dihydroguanine DNA N-glycosylase activity"/>
    <property type="evidence" value="ECO:0007669"/>
    <property type="project" value="TreeGrafter"/>
</dbReference>
<dbReference type="GO" id="GO:0140078">
    <property type="term" value="F:class I DNA-(apurinic or apyrimidinic site) endonuclease activity"/>
    <property type="evidence" value="ECO:0007669"/>
    <property type="project" value="UniProtKB-EC"/>
</dbReference>
<dbReference type="GO" id="GO:0003684">
    <property type="term" value="F:damaged DNA binding"/>
    <property type="evidence" value="ECO:0007669"/>
    <property type="project" value="InterPro"/>
</dbReference>
<dbReference type="GO" id="GO:0008270">
    <property type="term" value="F:zinc ion binding"/>
    <property type="evidence" value="ECO:0007669"/>
    <property type="project" value="UniProtKB-UniRule"/>
</dbReference>
<dbReference type="GO" id="GO:0006284">
    <property type="term" value="P:base-excision repair"/>
    <property type="evidence" value="ECO:0007669"/>
    <property type="project" value="InterPro"/>
</dbReference>
<dbReference type="CDD" id="cd08966">
    <property type="entry name" value="EcFpg-like_N"/>
    <property type="match status" value="1"/>
</dbReference>
<dbReference type="FunFam" id="1.10.8.50:FF:000003">
    <property type="entry name" value="Formamidopyrimidine-DNA glycosylase"/>
    <property type="match status" value="1"/>
</dbReference>
<dbReference type="FunFam" id="3.20.190.10:FF:000001">
    <property type="entry name" value="Formamidopyrimidine-DNA glycosylase"/>
    <property type="match status" value="1"/>
</dbReference>
<dbReference type="Gene3D" id="1.10.8.50">
    <property type="match status" value="1"/>
</dbReference>
<dbReference type="Gene3D" id="3.20.190.10">
    <property type="entry name" value="MutM-like, N-terminal"/>
    <property type="match status" value="1"/>
</dbReference>
<dbReference type="HAMAP" id="MF_00103">
    <property type="entry name" value="Fapy_DNA_glycosyl"/>
    <property type="match status" value="1"/>
</dbReference>
<dbReference type="InterPro" id="IPR015886">
    <property type="entry name" value="DNA_glyclase/AP_lyase_DNA-bd"/>
</dbReference>
<dbReference type="InterPro" id="IPR015887">
    <property type="entry name" value="DNA_glyclase_Znf_dom_DNA_BS"/>
</dbReference>
<dbReference type="InterPro" id="IPR020629">
    <property type="entry name" value="Formamido-pyr_DNA_Glyclase"/>
</dbReference>
<dbReference type="InterPro" id="IPR012319">
    <property type="entry name" value="FPG_cat"/>
</dbReference>
<dbReference type="InterPro" id="IPR035937">
    <property type="entry name" value="MutM-like_N-ter"/>
</dbReference>
<dbReference type="InterPro" id="IPR010979">
    <property type="entry name" value="Ribosomal_uS13-like_H2TH"/>
</dbReference>
<dbReference type="InterPro" id="IPR000214">
    <property type="entry name" value="Znf_DNA_glyclase/AP_lyase"/>
</dbReference>
<dbReference type="InterPro" id="IPR010663">
    <property type="entry name" value="Znf_FPG/IleRS"/>
</dbReference>
<dbReference type="NCBIfam" id="TIGR00577">
    <property type="entry name" value="fpg"/>
    <property type="match status" value="1"/>
</dbReference>
<dbReference type="NCBIfam" id="NF002211">
    <property type="entry name" value="PRK01103.1"/>
    <property type="match status" value="1"/>
</dbReference>
<dbReference type="PANTHER" id="PTHR22993">
    <property type="entry name" value="FORMAMIDOPYRIMIDINE-DNA GLYCOSYLASE"/>
    <property type="match status" value="1"/>
</dbReference>
<dbReference type="PANTHER" id="PTHR22993:SF9">
    <property type="entry name" value="FORMAMIDOPYRIMIDINE-DNA GLYCOSYLASE"/>
    <property type="match status" value="1"/>
</dbReference>
<dbReference type="Pfam" id="PF01149">
    <property type="entry name" value="Fapy_DNA_glyco"/>
    <property type="match status" value="1"/>
</dbReference>
<dbReference type="Pfam" id="PF06831">
    <property type="entry name" value="H2TH"/>
    <property type="match status" value="1"/>
</dbReference>
<dbReference type="Pfam" id="PF06827">
    <property type="entry name" value="zf-FPG_IleRS"/>
    <property type="match status" value="1"/>
</dbReference>
<dbReference type="SMART" id="SM00898">
    <property type="entry name" value="Fapy_DNA_glyco"/>
    <property type="match status" value="1"/>
</dbReference>
<dbReference type="SMART" id="SM01232">
    <property type="entry name" value="H2TH"/>
    <property type="match status" value="1"/>
</dbReference>
<dbReference type="SUPFAM" id="SSF57716">
    <property type="entry name" value="Glucocorticoid receptor-like (DNA-binding domain)"/>
    <property type="match status" value="1"/>
</dbReference>
<dbReference type="SUPFAM" id="SSF81624">
    <property type="entry name" value="N-terminal domain of MutM-like DNA repair proteins"/>
    <property type="match status" value="1"/>
</dbReference>
<dbReference type="SUPFAM" id="SSF46946">
    <property type="entry name" value="S13-like H2TH domain"/>
    <property type="match status" value="1"/>
</dbReference>
<dbReference type="PROSITE" id="PS51068">
    <property type="entry name" value="FPG_CAT"/>
    <property type="match status" value="1"/>
</dbReference>
<dbReference type="PROSITE" id="PS01242">
    <property type="entry name" value="ZF_FPG_1"/>
    <property type="match status" value="1"/>
</dbReference>
<dbReference type="PROSITE" id="PS51066">
    <property type="entry name" value="ZF_FPG_2"/>
    <property type="match status" value="1"/>
</dbReference>
<gene>
    <name evidence="2" type="primary">mutM</name>
    <name evidence="2" type="synonym">fpg</name>
    <name type="ordered locus">Ent638_0104</name>
</gene>
<name>FPG_ENT38</name>
<accession>A4W514</accession>
<feature type="initiator methionine" description="Removed" evidence="1">
    <location>
        <position position="1"/>
    </location>
</feature>
<feature type="chain" id="PRO_1000057693" description="Formamidopyrimidine-DNA glycosylase">
    <location>
        <begin position="2"/>
        <end position="269"/>
    </location>
</feature>
<feature type="zinc finger region" description="FPG-type" evidence="2">
    <location>
        <begin position="235"/>
        <end position="269"/>
    </location>
</feature>
<feature type="active site" description="Schiff-base intermediate with DNA" evidence="2">
    <location>
        <position position="2"/>
    </location>
</feature>
<feature type="active site" description="Proton donor" evidence="2">
    <location>
        <position position="3"/>
    </location>
</feature>
<feature type="active site" description="Proton donor; for beta-elimination activity" evidence="2">
    <location>
        <position position="57"/>
    </location>
</feature>
<feature type="active site" description="Proton donor; for delta-elimination activity" evidence="2">
    <location>
        <position position="259"/>
    </location>
</feature>
<feature type="binding site" evidence="2">
    <location>
        <position position="90"/>
    </location>
    <ligand>
        <name>DNA</name>
        <dbReference type="ChEBI" id="CHEBI:16991"/>
    </ligand>
</feature>
<feature type="binding site" evidence="2">
    <location>
        <position position="109"/>
    </location>
    <ligand>
        <name>DNA</name>
        <dbReference type="ChEBI" id="CHEBI:16991"/>
    </ligand>
</feature>
<feature type="binding site" evidence="2">
    <location>
        <position position="150"/>
    </location>
    <ligand>
        <name>DNA</name>
        <dbReference type="ChEBI" id="CHEBI:16991"/>
    </ligand>
</feature>
<comment type="function">
    <text evidence="2">Involved in base excision repair of DNA damaged by oxidation or by mutagenic agents. Acts as a DNA glycosylase that recognizes and removes damaged bases. Has a preference for oxidized purines, such as 7,8-dihydro-8-oxoguanine (8-oxoG). Has AP (apurinic/apyrimidinic) lyase activity and introduces nicks in the DNA strand. Cleaves the DNA backbone by beta-delta elimination to generate a single-strand break at the site of the removed base with both 3'- and 5'-phosphates.</text>
</comment>
<comment type="catalytic activity">
    <reaction evidence="2">
        <text>Hydrolysis of DNA containing ring-opened 7-methylguanine residues, releasing 2,6-diamino-4-hydroxy-5-(N-methyl)formamidopyrimidine.</text>
        <dbReference type="EC" id="3.2.2.23"/>
    </reaction>
</comment>
<comment type="catalytic activity">
    <reaction evidence="2">
        <text>2'-deoxyribonucleotide-(2'-deoxyribose 5'-phosphate)-2'-deoxyribonucleotide-DNA = a 3'-end 2'-deoxyribonucleotide-(2,3-dehydro-2,3-deoxyribose 5'-phosphate)-DNA + a 5'-end 5'-phospho-2'-deoxyribonucleoside-DNA + H(+)</text>
        <dbReference type="Rhea" id="RHEA:66592"/>
        <dbReference type="Rhea" id="RHEA-COMP:13180"/>
        <dbReference type="Rhea" id="RHEA-COMP:16897"/>
        <dbReference type="Rhea" id="RHEA-COMP:17067"/>
        <dbReference type="ChEBI" id="CHEBI:15378"/>
        <dbReference type="ChEBI" id="CHEBI:136412"/>
        <dbReference type="ChEBI" id="CHEBI:157695"/>
        <dbReference type="ChEBI" id="CHEBI:167181"/>
        <dbReference type="EC" id="4.2.99.18"/>
    </reaction>
</comment>
<comment type="cofactor">
    <cofactor evidence="2">
        <name>Zn(2+)</name>
        <dbReference type="ChEBI" id="CHEBI:29105"/>
    </cofactor>
    <text evidence="2">Binds 1 zinc ion per subunit.</text>
</comment>
<comment type="subunit">
    <text evidence="2">Monomer.</text>
</comment>
<comment type="similarity">
    <text evidence="2">Belongs to the FPG family.</text>
</comment>